<evidence type="ECO:0000255" key="1">
    <source>
        <dbReference type="HAMAP-Rule" id="MF_00438"/>
    </source>
</evidence>
<protein>
    <recommendedName>
        <fullName evidence="1">Photosystem II reaction center protein M</fullName>
        <shortName evidence="1">PSII-M</shortName>
    </recommendedName>
</protein>
<feature type="chain" id="PRO_0000325743" description="Photosystem II reaction center protein M">
    <location>
        <begin position="1"/>
        <end position="34"/>
    </location>
</feature>
<feature type="transmembrane region" description="Helical" evidence="1">
    <location>
        <begin position="5"/>
        <end position="25"/>
    </location>
</feature>
<accession>Q09FW7</accession>
<proteinExistence type="inferred from homology"/>
<reference key="1">
    <citation type="journal article" date="2006" name="BMC Plant Biol.">
        <title>Rapid and accurate pyrosequencing of angiosperm plastid genomes.</title>
        <authorList>
            <person name="Moore M.J."/>
            <person name="Dhingra A."/>
            <person name="Soltis P.S."/>
            <person name="Shaw R."/>
            <person name="Farmerie W.G."/>
            <person name="Folta K.M."/>
            <person name="Soltis D.E."/>
        </authorList>
    </citation>
    <scope>NUCLEOTIDE SEQUENCE [LARGE SCALE GENOMIC DNA]</scope>
</reference>
<comment type="function">
    <text evidence="1">One of the components of the core complex of photosystem II (PSII). PSII is a light-driven water:plastoquinone oxidoreductase that uses light energy to abstract electrons from H(2)O, generating O(2) and a proton gradient subsequently used for ATP formation. It consists of a core antenna complex that captures photons, and an electron transfer chain that converts photonic excitation into a charge separation. This subunit is found at the monomer-monomer interface.</text>
</comment>
<comment type="subunit">
    <text evidence="1">PSII is composed of 1 copy each of membrane proteins PsbA, PsbB, PsbC, PsbD, PsbE, PsbF, PsbH, PsbI, PsbJ, PsbK, PsbL, PsbM, PsbT, PsbX, PsbY, PsbZ, Psb30/Ycf12, at least 3 peripheral proteins of the oxygen-evolving complex and a large number of cofactors. It forms dimeric complexes.</text>
</comment>
<comment type="subcellular location">
    <subcellularLocation>
        <location evidence="1">Plastid</location>
        <location evidence="1">Chloroplast thylakoid membrane</location>
        <topology evidence="1">Single-pass membrane protein</topology>
    </subcellularLocation>
</comment>
<comment type="similarity">
    <text evidence="1">Belongs to the PsbM family.</text>
</comment>
<gene>
    <name evidence="1" type="primary">psbM</name>
</gene>
<organism>
    <name type="scientific">Nandina domestica</name>
    <name type="common">Heavenly bamboo</name>
    <dbReference type="NCBI Taxonomy" id="41776"/>
    <lineage>
        <taxon>Eukaryota</taxon>
        <taxon>Viridiplantae</taxon>
        <taxon>Streptophyta</taxon>
        <taxon>Embryophyta</taxon>
        <taxon>Tracheophyta</taxon>
        <taxon>Spermatophyta</taxon>
        <taxon>Magnoliopsida</taxon>
        <taxon>Ranunculales</taxon>
        <taxon>Berberidaceae</taxon>
        <taxon>Nandinoideae</taxon>
        <taxon>Nandineae</taxon>
        <taxon>Nandina</taxon>
    </lineage>
</organism>
<geneLocation type="chloroplast"/>
<name>PSBM_NANDO</name>
<sequence>MEVNILAFIATALFILIPTAFLLIIYVKTVSQND</sequence>
<dbReference type="EMBL" id="DQ923117">
    <property type="protein sequence ID" value="ABI49857.1"/>
    <property type="molecule type" value="Genomic_DNA"/>
</dbReference>
<dbReference type="RefSeq" id="YP_740644.1">
    <property type="nucleotide sequence ID" value="NC_008336.1"/>
</dbReference>
<dbReference type="SMR" id="Q09FW7"/>
<dbReference type="GeneID" id="4271575"/>
<dbReference type="GO" id="GO:0009535">
    <property type="term" value="C:chloroplast thylakoid membrane"/>
    <property type="evidence" value="ECO:0007669"/>
    <property type="project" value="UniProtKB-SubCell"/>
</dbReference>
<dbReference type="GO" id="GO:0009523">
    <property type="term" value="C:photosystem II"/>
    <property type="evidence" value="ECO:0007669"/>
    <property type="project" value="UniProtKB-KW"/>
</dbReference>
<dbReference type="GO" id="GO:0019684">
    <property type="term" value="P:photosynthesis, light reaction"/>
    <property type="evidence" value="ECO:0007669"/>
    <property type="project" value="InterPro"/>
</dbReference>
<dbReference type="HAMAP" id="MF_00438">
    <property type="entry name" value="PSII_PsbM"/>
    <property type="match status" value="1"/>
</dbReference>
<dbReference type="InterPro" id="IPR007826">
    <property type="entry name" value="PSII_PsbM"/>
</dbReference>
<dbReference type="InterPro" id="IPR037269">
    <property type="entry name" value="PSII_PsbM_sf"/>
</dbReference>
<dbReference type="NCBIfam" id="TIGR03038">
    <property type="entry name" value="PS_II_psbM"/>
    <property type="match status" value="1"/>
</dbReference>
<dbReference type="PANTHER" id="PTHR35774">
    <property type="entry name" value="PHOTOSYSTEM II REACTION CENTER PROTEIN M"/>
    <property type="match status" value="1"/>
</dbReference>
<dbReference type="PANTHER" id="PTHR35774:SF1">
    <property type="entry name" value="PHOTOSYSTEM II REACTION CENTER PROTEIN M"/>
    <property type="match status" value="1"/>
</dbReference>
<dbReference type="Pfam" id="PF05151">
    <property type="entry name" value="PsbM"/>
    <property type="match status" value="1"/>
</dbReference>
<dbReference type="SUPFAM" id="SSF161033">
    <property type="entry name" value="Photosystem II reaction center protein M, PsbM"/>
    <property type="match status" value="1"/>
</dbReference>
<keyword id="KW-0150">Chloroplast</keyword>
<keyword id="KW-0472">Membrane</keyword>
<keyword id="KW-0602">Photosynthesis</keyword>
<keyword id="KW-0604">Photosystem II</keyword>
<keyword id="KW-0934">Plastid</keyword>
<keyword id="KW-0674">Reaction center</keyword>
<keyword id="KW-0793">Thylakoid</keyword>
<keyword id="KW-0812">Transmembrane</keyword>
<keyword id="KW-1133">Transmembrane helix</keyword>